<proteinExistence type="inferred from homology"/>
<sequence>MQVTVEDLSSVKKVLHIEAPAEDVKKALDSAYAELKKQAKVKGFRPGKAPRSVLERLYKSDVESDVAGEIISDAFRDAIMETKLKIVGPPEIEPPAIVSDEPYKFDATVEIFPELSDLNLKEIELSKNMYKATEQEIENQIAMIRKNMSSLETEEEDRPAKEEDFVLIDYEGVCPDGQPDELRFTENFTMELGTGRILKDFDAQIVGMKRDEEKDFEISFPEDYFNKELASKQVKFHVKLKEIRKQILPELDDEFAKDLGEYETLDQLKDSIRDHLQQGYDRRSEQELDEQVFQALLNRVEFEVPETLIKHETASMVSEAERALSYRDMTFEDTGATKEDMEERYREPAEQQVRRYLLLDKIVEQENVELPEEELENAFKGMAESLRQPLEIVKKYYASDAEQMNMLRQTLLQKEALKYVKNLNEIKEVELELQETEE</sequence>
<keyword id="KW-0131">Cell cycle</keyword>
<keyword id="KW-0132">Cell division</keyword>
<keyword id="KW-0143">Chaperone</keyword>
<keyword id="KW-0963">Cytoplasm</keyword>
<keyword id="KW-0413">Isomerase</keyword>
<keyword id="KW-1185">Reference proteome</keyword>
<keyword id="KW-0697">Rotamase</keyword>
<organism>
    <name type="scientific">Desulfatibacillum aliphaticivorans</name>
    <dbReference type="NCBI Taxonomy" id="218208"/>
    <lineage>
        <taxon>Bacteria</taxon>
        <taxon>Pseudomonadati</taxon>
        <taxon>Thermodesulfobacteriota</taxon>
        <taxon>Desulfobacteria</taxon>
        <taxon>Desulfobacterales</taxon>
        <taxon>Desulfatibacillaceae</taxon>
        <taxon>Desulfatibacillum</taxon>
    </lineage>
</organism>
<reference key="1">
    <citation type="journal article" date="2012" name="Environ. Microbiol.">
        <title>The genome sequence of Desulfatibacillum alkenivorans AK-01: a blueprint for anaerobic alkane oxidation.</title>
        <authorList>
            <person name="Callaghan A.V."/>
            <person name="Morris B.E."/>
            <person name="Pereira I.A."/>
            <person name="McInerney M.J."/>
            <person name="Austin R.N."/>
            <person name="Groves J.T."/>
            <person name="Kukor J.J."/>
            <person name="Suflita J.M."/>
            <person name="Young L.Y."/>
            <person name="Zylstra G.J."/>
            <person name="Wawrik B."/>
        </authorList>
    </citation>
    <scope>NUCLEOTIDE SEQUENCE [LARGE SCALE GENOMIC DNA]</scope>
    <source>
        <strain>AK-01</strain>
    </source>
</reference>
<gene>
    <name evidence="1" type="primary">tig</name>
    <name type="ordered locus">Dalk_1457</name>
</gene>
<name>TIG_DESAL</name>
<accession>B8FA61</accession>
<evidence type="ECO:0000255" key="1">
    <source>
        <dbReference type="HAMAP-Rule" id="MF_00303"/>
    </source>
</evidence>
<protein>
    <recommendedName>
        <fullName evidence="1">Trigger factor</fullName>
        <shortName evidence="1">TF</shortName>
        <ecNumber evidence="1">5.2.1.8</ecNumber>
    </recommendedName>
    <alternativeName>
        <fullName evidence="1">PPIase</fullName>
    </alternativeName>
</protein>
<comment type="function">
    <text evidence="1">Involved in protein export. Acts as a chaperone by maintaining the newly synthesized protein in an open conformation. Functions as a peptidyl-prolyl cis-trans isomerase.</text>
</comment>
<comment type="catalytic activity">
    <reaction evidence="1">
        <text>[protein]-peptidylproline (omega=180) = [protein]-peptidylproline (omega=0)</text>
        <dbReference type="Rhea" id="RHEA:16237"/>
        <dbReference type="Rhea" id="RHEA-COMP:10747"/>
        <dbReference type="Rhea" id="RHEA-COMP:10748"/>
        <dbReference type="ChEBI" id="CHEBI:83833"/>
        <dbReference type="ChEBI" id="CHEBI:83834"/>
        <dbReference type="EC" id="5.2.1.8"/>
    </reaction>
</comment>
<comment type="subcellular location">
    <subcellularLocation>
        <location>Cytoplasm</location>
    </subcellularLocation>
    <text evidence="1">About half TF is bound to the ribosome near the polypeptide exit tunnel while the other half is free in the cytoplasm.</text>
</comment>
<comment type="domain">
    <text evidence="1">Consists of 3 domains; the N-terminus binds the ribosome, the middle domain has PPIase activity, while the C-terminus has intrinsic chaperone activity on its own.</text>
</comment>
<comment type="similarity">
    <text evidence="1">Belongs to the FKBP-type PPIase family. Tig subfamily.</text>
</comment>
<feature type="chain" id="PRO_1000119513" description="Trigger factor">
    <location>
        <begin position="1"/>
        <end position="438"/>
    </location>
</feature>
<feature type="domain" description="PPIase FKBP-type" evidence="1">
    <location>
        <begin position="163"/>
        <end position="249"/>
    </location>
</feature>
<dbReference type="EC" id="5.2.1.8" evidence="1"/>
<dbReference type="EMBL" id="CP001322">
    <property type="protein sequence ID" value="ACL03157.1"/>
    <property type="molecule type" value="Genomic_DNA"/>
</dbReference>
<dbReference type="RefSeq" id="WP_012610592.1">
    <property type="nucleotide sequence ID" value="NC_011768.1"/>
</dbReference>
<dbReference type="SMR" id="B8FA61"/>
<dbReference type="KEGG" id="dal:Dalk_1457"/>
<dbReference type="eggNOG" id="COG0544">
    <property type="taxonomic scope" value="Bacteria"/>
</dbReference>
<dbReference type="HOGENOM" id="CLU_033058_3_2_7"/>
<dbReference type="Proteomes" id="UP000000739">
    <property type="component" value="Chromosome"/>
</dbReference>
<dbReference type="GO" id="GO:0005737">
    <property type="term" value="C:cytoplasm"/>
    <property type="evidence" value="ECO:0007669"/>
    <property type="project" value="UniProtKB-SubCell"/>
</dbReference>
<dbReference type="GO" id="GO:0003755">
    <property type="term" value="F:peptidyl-prolyl cis-trans isomerase activity"/>
    <property type="evidence" value="ECO:0007669"/>
    <property type="project" value="UniProtKB-UniRule"/>
</dbReference>
<dbReference type="GO" id="GO:0044183">
    <property type="term" value="F:protein folding chaperone"/>
    <property type="evidence" value="ECO:0007669"/>
    <property type="project" value="TreeGrafter"/>
</dbReference>
<dbReference type="GO" id="GO:0043022">
    <property type="term" value="F:ribosome binding"/>
    <property type="evidence" value="ECO:0007669"/>
    <property type="project" value="TreeGrafter"/>
</dbReference>
<dbReference type="GO" id="GO:0051083">
    <property type="term" value="P:'de novo' cotranslational protein folding"/>
    <property type="evidence" value="ECO:0007669"/>
    <property type="project" value="TreeGrafter"/>
</dbReference>
<dbReference type="GO" id="GO:0051301">
    <property type="term" value="P:cell division"/>
    <property type="evidence" value="ECO:0007669"/>
    <property type="project" value="UniProtKB-KW"/>
</dbReference>
<dbReference type="GO" id="GO:0061077">
    <property type="term" value="P:chaperone-mediated protein folding"/>
    <property type="evidence" value="ECO:0007669"/>
    <property type="project" value="TreeGrafter"/>
</dbReference>
<dbReference type="GO" id="GO:0015031">
    <property type="term" value="P:protein transport"/>
    <property type="evidence" value="ECO:0007669"/>
    <property type="project" value="UniProtKB-UniRule"/>
</dbReference>
<dbReference type="GO" id="GO:0043335">
    <property type="term" value="P:protein unfolding"/>
    <property type="evidence" value="ECO:0007669"/>
    <property type="project" value="TreeGrafter"/>
</dbReference>
<dbReference type="Gene3D" id="3.10.50.40">
    <property type="match status" value="1"/>
</dbReference>
<dbReference type="Gene3D" id="3.30.70.1050">
    <property type="entry name" value="Trigger factor ribosome-binding domain"/>
    <property type="match status" value="1"/>
</dbReference>
<dbReference type="Gene3D" id="1.10.3120.10">
    <property type="entry name" value="Trigger factor, C-terminal domain"/>
    <property type="match status" value="1"/>
</dbReference>
<dbReference type="HAMAP" id="MF_00303">
    <property type="entry name" value="Trigger_factor_Tig"/>
    <property type="match status" value="1"/>
</dbReference>
<dbReference type="InterPro" id="IPR046357">
    <property type="entry name" value="PPIase_dom_sf"/>
</dbReference>
<dbReference type="InterPro" id="IPR001179">
    <property type="entry name" value="PPIase_FKBP_dom"/>
</dbReference>
<dbReference type="InterPro" id="IPR005215">
    <property type="entry name" value="Trig_fac"/>
</dbReference>
<dbReference type="InterPro" id="IPR008880">
    <property type="entry name" value="Trigger_fac_C"/>
</dbReference>
<dbReference type="InterPro" id="IPR037041">
    <property type="entry name" value="Trigger_fac_C_sf"/>
</dbReference>
<dbReference type="InterPro" id="IPR008881">
    <property type="entry name" value="Trigger_fac_ribosome-bd_bac"/>
</dbReference>
<dbReference type="InterPro" id="IPR036611">
    <property type="entry name" value="Trigger_fac_ribosome-bd_sf"/>
</dbReference>
<dbReference type="InterPro" id="IPR027304">
    <property type="entry name" value="Trigger_fact/SurA_dom_sf"/>
</dbReference>
<dbReference type="NCBIfam" id="TIGR00115">
    <property type="entry name" value="tig"/>
    <property type="match status" value="1"/>
</dbReference>
<dbReference type="PANTHER" id="PTHR30560">
    <property type="entry name" value="TRIGGER FACTOR CHAPERONE AND PEPTIDYL-PROLYL CIS/TRANS ISOMERASE"/>
    <property type="match status" value="1"/>
</dbReference>
<dbReference type="PANTHER" id="PTHR30560:SF3">
    <property type="entry name" value="TRIGGER FACTOR-LIKE PROTEIN TIG, CHLOROPLASTIC"/>
    <property type="match status" value="1"/>
</dbReference>
<dbReference type="Pfam" id="PF00254">
    <property type="entry name" value="FKBP_C"/>
    <property type="match status" value="1"/>
</dbReference>
<dbReference type="Pfam" id="PF05698">
    <property type="entry name" value="Trigger_C"/>
    <property type="match status" value="1"/>
</dbReference>
<dbReference type="Pfam" id="PF05697">
    <property type="entry name" value="Trigger_N"/>
    <property type="match status" value="1"/>
</dbReference>
<dbReference type="PIRSF" id="PIRSF003095">
    <property type="entry name" value="Trigger_factor"/>
    <property type="match status" value="1"/>
</dbReference>
<dbReference type="SUPFAM" id="SSF54534">
    <property type="entry name" value="FKBP-like"/>
    <property type="match status" value="1"/>
</dbReference>
<dbReference type="SUPFAM" id="SSF109998">
    <property type="entry name" value="Triger factor/SurA peptide-binding domain-like"/>
    <property type="match status" value="1"/>
</dbReference>
<dbReference type="SUPFAM" id="SSF102735">
    <property type="entry name" value="Trigger factor ribosome-binding domain"/>
    <property type="match status" value="1"/>
</dbReference>
<dbReference type="PROSITE" id="PS50059">
    <property type="entry name" value="FKBP_PPIASE"/>
    <property type="match status" value="1"/>
</dbReference>